<comment type="function">
    <text evidence="1">In addition to polymerase activity, this DNA polymerase exhibits 3'-5' and 5'-3' exonuclease activity.</text>
</comment>
<comment type="catalytic activity">
    <reaction>
        <text>DNA(n) + a 2'-deoxyribonucleoside 5'-triphosphate = DNA(n+1) + diphosphate</text>
        <dbReference type="Rhea" id="RHEA:22508"/>
        <dbReference type="Rhea" id="RHEA-COMP:17339"/>
        <dbReference type="Rhea" id="RHEA-COMP:17340"/>
        <dbReference type="ChEBI" id="CHEBI:33019"/>
        <dbReference type="ChEBI" id="CHEBI:61560"/>
        <dbReference type="ChEBI" id="CHEBI:173112"/>
        <dbReference type="EC" id="2.7.7.7"/>
    </reaction>
</comment>
<comment type="subunit">
    <text evidence="1">Single-chain monomer with multiple functions.</text>
</comment>
<comment type="similarity">
    <text evidence="2">Belongs to the DNA polymerase type-A family.</text>
</comment>
<name>DPO1_PSEAE</name>
<reference key="1">
    <citation type="journal article" date="2000" name="Nature">
        <title>Complete genome sequence of Pseudomonas aeruginosa PAO1, an opportunistic pathogen.</title>
        <authorList>
            <person name="Stover C.K."/>
            <person name="Pham X.-Q.T."/>
            <person name="Erwin A.L."/>
            <person name="Mizoguchi S.D."/>
            <person name="Warrener P."/>
            <person name="Hickey M.J."/>
            <person name="Brinkman F.S.L."/>
            <person name="Hufnagle W.O."/>
            <person name="Kowalik D.J."/>
            <person name="Lagrou M."/>
            <person name="Garber R.L."/>
            <person name="Goltry L."/>
            <person name="Tolentino E."/>
            <person name="Westbrock-Wadman S."/>
            <person name="Yuan Y."/>
            <person name="Brody L.L."/>
            <person name="Coulter S.N."/>
            <person name="Folger K.R."/>
            <person name="Kas A."/>
            <person name="Larbig K."/>
            <person name="Lim R.M."/>
            <person name="Smith K.A."/>
            <person name="Spencer D.H."/>
            <person name="Wong G.K.-S."/>
            <person name="Wu Z."/>
            <person name="Paulsen I.T."/>
            <person name="Reizer J."/>
            <person name="Saier M.H. Jr."/>
            <person name="Hancock R.E.W."/>
            <person name="Lory S."/>
            <person name="Olson M.V."/>
        </authorList>
    </citation>
    <scope>NUCLEOTIDE SEQUENCE [LARGE SCALE GENOMIC DNA]</scope>
    <source>
        <strain>ATCC 15692 / DSM 22644 / CIP 104116 / JCM 14847 / LMG 12228 / 1C / PRS 101 / PAO1</strain>
    </source>
</reference>
<organism>
    <name type="scientific">Pseudomonas aeruginosa (strain ATCC 15692 / DSM 22644 / CIP 104116 / JCM 14847 / LMG 12228 / 1C / PRS 101 / PAO1)</name>
    <dbReference type="NCBI Taxonomy" id="208964"/>
    <lineage>
        <taxon>Bacteria</taxon>
        <taxon>Pseudomonadati</taxon>
        <taxon>Pseudomonadota</taxon>
        <taxon>Gammaproteobacteria</taxon>
        <taxon>Pseudomonadales</taxon>
        <taxon>Pseudomonadaceae</taxon>
        <taxon>Pseudomonas</taxon>
    </lineage>
</organism>
<keyword id="KW-0227">DNA damage</keyword>
<keyword id="KW-0234">DNA repair</keyword>
<keyword id="KW-0235">DNA replication</keyword>
<keyword id="KW-0238">DNA-binding</keyword>
<keyword id="KW-0239">DNA-directed DNA polymerase</keyword>
<keyword id="KW-0269">Exonuclease</keyword>
<keyword id="KW-0378">Hydrolase</keyword>
<keyword id="KW-0540">Nuclease</keyword>
<keyword id="KW-0548">Nucleotidyltransferase</keyword>
<keyword id="KW-1185">Reference proteome</keyword>
<keyword id="KW-0808">Transferase</keyword>
<evidence type="ECO:0000250" key="1"/>
<evidence type="ECO:0000305" key="2"/>
<feature type="chain" id="PRO_0000287729" description="DNA polymerase I">
    <location>
        <begin position="1"/>
        <end position="913"/>
    </location>
</feature>
<feature type="domain" description="5'-3' exonuclease">
    <location>
        <begin position="1"/>
        <end position="305"/>
    </location>
</feature>
<feature type="domain" description="3'-5' exonuclease">
    <location>
        <begin position="306"/>
        <end position="501"/>
    </location>
</feature>
<feature type="region of interest" description="Polymerase">
    <location>
        <begin position="505"/>
        <end position="913"/>
    </location>
</feature>
<gene>
    <name type="primary">polA</name>
    <name type="ordered locus">PA5493</name>
</gene>
<dbReference type="EC" id="2.7.7.7"/>
<dbReference type="EMBL" id="AE004091">
    <property type="protein sequence ID" value="AAG08878.1"/>
    <property type="molecule type" value="Genomic_DNA"/>
</dbReference>
<dbReference type="PIR" id="F82958">
    <property type="entry name" value="F82958"/>
</dbReference>
<dbReference type="RefSeq" id="NP_254180.1">
    <property type="nucleotide sequence ID" value="NC_002516.2"/>
</dbReference>
<dbReference type="RefSeq" id="WP_003114123.1">
    <property type="nucleotide sequence ID" value="NZ_QZGE01000012.1"/>
</dbReference>
<dbReference type="SMR" id="Q9HT80"/>
<dbReference type="FunCoup" id="Q9HT80">
    <property type="interactions" value="588"/>
</dbReference>
<dbReference type="STRING" id="208964.PA5493"/>
<dbReference type="PaxDb" id="208964-PA5493"/>
<dbReference type="GeneID" id="877794"/>
<dbReference type="KEGG" id="pae:PA5493"/>
<dbReference type="PATRIC" id="fig|208964.12.peg.5758"/>
<dbReference type="PseudoCAP" id="PA5493"/>
<dbReference type="HOGENOM" id="CLU_004675_0_0_6"/>
<dbReference type="InParanoid" id="Q9HT80"/>
<dbReference type="OrthoDB" id="9806424at2"/>
<dbReference type="PhylomeDB" id="Q9HT80"/>
<dbReference type="BioCyc" id="PAER208964:G1FZ6-5620-MONOMER"/>
<dbReference type="Proteomes" id="UP000002438">
    <property type="component" value="Chromosome"/>
</dbReference>
<dbReference type="GO" id="GO:0008408">
    <property type="term" value="F:3'-5' exonuclease activity"/>
    <property type="evidence" value="ECO:0007669"/>
    <property type="project" value="InterPro"/>
</dbReference>
<dbReference type="GO" id="GO:0008409">
    <property type="term" value="F:5'-3' exonuclease activity"/>
    <property type="evidence" value="ECO:0007669"/>
    <property type="project" value="InterPro"/>
</dbReference>
<dbReference type="GO" id="GO:0003677">
    <property type="term" value="F:DNA binding"/>
    <property type="evidence" value="ECO:0000250"/>
    <property type="project" value="PseudoCAP"/>
</dbReference>
<dbReference type="GO" id="GO:0003887">
    <property type="term" value="F:DNA-directed DNA polymerase activity"/>
    <property type="evidence" value="ECO:0000318"/>
    <property type="project" value="GO_Central"/>
</dbReference>
<dbReference type="GO" id="GO:0006261">
    <property type="term" value="P:DNA-templated DNA replication"/>
    <property type="evidence" value="ECO:0007669"/>
    <property type="project" value="InterPro"/>
</dbReference>
<dbReference type="GO" id="GO:0006302">
    <property type="term" value="P:double-strand break repair"/>
    <property type="evidence" value="ECO:0000318"/>
    <property type="project" value="GO_Central"/>
</dbReference>
<dbReference type="CDD" id="cd08637">
    <property type="entry name" value="DNA_pol_A_pol_I_C"/>
    <property type="match status" value="1"/>
</dbReference>
<dbReference type="CDD" id="cd06139">
    <property type="entry name" value="DNA_polA_I_Ecoli_like_exo"/>
    <property type="match status" value="1"/>
</dbReference>
<dbReference type="CDD" id="cd09898">
    <property type="entry name" value="H3TH_53EXO"/>
    <property type="match status" value="1"/>
</dbReference>
<dbReference type="CDD" id="cd09859">
    <property type="entry name" value="PIN_53EXO"/>
    <property type="match status" value="1"/>
</dbReference>
<dbReference type="FunFam" id="1.10.150.20:FF:000002">
    <property type="entry name" value="DNA polymerase I"/>
    <property type="match status" value="1"/>
</dbReference>
<dbReference type="FunFam" id="1.10.150.20:FF:000003">
    <property type="entry name" value="DNA polymerase I"/>
    <property type="match status" value="1"/>
</dbReference>
<dbReference type="FunFam" id="1.20.1060.10:FF:000001">
    <property type="entry name" value="DNA polymerase I"/>
    <property type="match status" value="1"/>
</dbReference>
<dbReference type="FunFam" id="3.30.420.10:FF:000026">
    <property type="entry name" value="DNA polymerase I"/>
    <property type="match status" value="1"/>
</dbReference>
<dbReference type="FunFam" id="3.40.50.1010:FF:000001">
    <property type="entry name" value="DNA polymerase I"/>
    <property type="match status" value="1"/>
</dbReference>
<dbReference type="Gene3D" id="3.30.70.370">
    <property type="match status" value="1"/>
</dbReference>
<dbReference type="Gene3D" id="1.10.150.20">
    <property type="entry name" value="5' to 3' exonuclease, C-terminal subdomain"/>
    <property type="match status" value="2"/>
</dbReference>
<dbReference type="Gene3D" id="3.40.50.1010">
    <property type="entry name" value="5'-nuclease"/>
    <property type="match status" value="1"/>
</dbReference>
<dbReference type="Gene3D" id="3.30.420.10">
    <property type="entry name" value="Ribonuclease H-like superfamily/Ribonuclease H"/>
    <property type="match status" value="1"/>
</dbReference>
<dbReference type="Gene3D" id="1.20.1060.10">
    <property type="entry name" value="Taq DNA Polymerase, Chain T, domain 4"/>
    <property type="match status" value="1"/>
</dbReference>
<dbReference type="InterPro" id="IPR002562">
    <property type="entry name" value="3'-5'_exonuclease_dom"/>
</dbReference>
<dbReference type="InterPro" id="IPR020046">
    <property type="entry name" value="5-3_exonucl_a-hlix_arch_N"/>
</dbReference>
<dbReference type="InterPro" id="IPR002421">
    <property type="entry name" value="5-3_exonuclease"/>
</dbReference>
<dbReference type="InterPro" id="IPR036279">
    <property type="entry name" value="5-3_exonuclease_C_sf"/>
</dbReference>
<dbReference type="InterPro" id="IPR019760">
    <property type="entry name" value="DNA-dir_DNA_pol_A_CS"/>
</dbReference>
<dbReference type="InterPro" id="IPR001098">
    <property type="entry name" value="DNA-dir_DNA_pol_A_palm_dom"/>
</dbReference>
<dbReference type="InterPro" id="IPR043502">
    <property type="entry name" value="DNA/RNA_pol_sf"/>
</dbReference>
<dbReference type="InterPro" id="IPR020045">
    <property type="entry name" value="DNA_polI_H3TH"/>
</dbReference>
<dbReference type="InterPro" id="IPR018320">
    <property type="entry name" value="DNA_polymerase_1"/>
</dbReference>
<dbReference type="InterPro" id="IPR002298">
    <property type="entry name" value="DNA_polymerase_A"/>
</dbReference>
<dbReference type="InterPro" id="IPR008918">
    <property type="entry name" value="HhH2"/>
</dbReference>
<dbReference type="InterPro" id="IPR029060">
    <property type="entry name" value="PIN-like_dom_sf"/>
</dbReference>
<dbReference type="InterPro" id="IPR012337">
    <property type="entry name" value="RNaseH-like_sf"/>
</dbReference>
<dbReference type="InterPro" id="IPR036397">
    <property type="entry name" value="RNaseH_sf"/>
</dbReference>
<dbReference type="NCBIfam" id="TIGR00593">
    <property type="entry name" value="pola"/>
    <property type="match status" value="1"/>
</dbReference>
<dbReference type="NCBIfam" id="NF004397">
    <property type="entry name" value="PRK05755.1"/>
    <property type="match status" value="1"/>
</dbReference>
<dbReference type="PANTHER" id="PTHR10133">
    <property type="entry name" value="DNA POLYMERASE I"/>
    <property type="match status" value="1"/>
</dbReference>
<dbReference type="PANTHER" id="PTHR10133:SF27">
    <property type="entry name" value="DNA POLYMERASE NU"/>
    <property type="match status" value="1"/>
</dbReference>
<dbReference type="Pfam" id="PF01367">
    <property type="entry name" value="5_3_exonuc"/>
    <property type="match status" value="1"/>
</dbReference>
<dbReference type="Pfam" id="PF02739">
    <property type="entry name" value="5_3_exonuc_N"/>
    <property type="match status" value="1"/>
</dbReference>
<dbReference type="Pfam" id="PF00476">
    <property type="entry name" value="DNA_pol_A"/>
    <property type="match status" value="1"/>
</dbReference>
<dbReference type="Pfam" id="PF01612">
    <property type="entry name" value="DNA_pol_A_exo1"/>
    <property type="match status" value="1"/>
</dbReference>
<dbReference type="PRINTS" id="PR00868">
    <property type="entry name" value="DNAPOLI"/>
</dbReference>
<dbReference type="SMART" id="SM00474">
    <property type="entry name" value="35EXOc"/>
    <property type="match status" value="1"/>
</dbReference>
<dbReference type="SMART" id="SM00475">
    <property type="entry name" value="53EXOc"/>
    <property type="match status" value="1"/>
</dbReference>
<dbReference type="SMART" id="SM00279">
    <property type="entry name" value="HhH2"/>
    <property type="match status" value="1"/>
</dbReference>
<dbReference type="SMART" id="SM00482">
    <property type="entry name" value="POLAc"/>
    <property type="match status" value="1"/>
</dbReference>
<dbReference type="SUPFAM" id="SSF47807">
    <property type="entry name" value="5' to 3' exonuclease, C-terminal subdomain"/>
    <property type="match status" value="1"/>
</dbReference>
<dbReference type="SUPFAM" id="SSF56672">
    <property type="entry name" value="DNA/RNA polymerases"/>
    <property type="match status" value="1"/>
</dbReference>
<dbReference type="SUPFAM" id="SSF88723">
    <property type="entry name" value="PIN domain-like"/>
    <property type="match status" value="1"/>
</dbReference>
<dbReference type="SUPFAM" id="SSF53098">
    <property type="entry name" value="Ribonuclease H-like"/>
    <property type="match status" value="1"/>
</dbReference>
<dbReference type="PROSITE" id="PS00447">
    <property type="entry name" value="DNA_POLYMERASE_A"/>
    <property type="match status" value="1"/>
</dbReference>
<protein>
    <recommendedName>
        <fullName>DNA polymerase I</fullName>
        <shortName>POL I</shortName>
        <ecNumber>2.7.7.7</ecNumber>
    </recommendedName>
</protein>
<sequence length="913" mass="99793">MSQAPLVLVDGSSYLYRAFHALPPLTTSTGKPTGAVKGVLNMLLSLRKQYPDSPFAVVFDAKGPTFRDELFAEYKANRPSMPDDLRVQVEPLHASVRALGLPLLCVEGVEADDVIGTLARSSAAADRPVVISTGDKDMAQLVDGHITLVNTMTGSRLDVDGVKEKFGVGPELIIDFLALMGDKVDNIPGVPGVGEKTALGLLTGVGGGLEVLYASLDKVPELPIRGAKGLPAKLEENREQAFLSYQLATIKTDVELDVEIDKLYPGEPQREALIALYRELEFKNWLDDLLREAKEAGENGEAETPIQAEVDYDVVLDQAGFDAWLKKLEEAELIAFDTETTSIDAQQAQVVGVSFAVKEGEAAYVPLAHSYMGVPEQLDRDAVLRALKPLLEDPKKLKVGQHAKYDINVLANASTPIALRGVAYDTMLESYVLDSTATRHDMDSLALKYLGHSTIRFEDIAGKGAKQLTFDQIAIEQAGPYAAEDADVTLRLHQALWQKLEAIPSLARVLTDIEMPLVPVLARIERNGALVDANLLGIQSRELGEKMVALERQAYDLAGQEFNLGSPKQLGAILYDKLGLPVLSKTATGQPSTAEAVLAELAEQDFELPKVIMQYRSMSKLKSTYTDRLPEQINPRTGRIHTSYHQAVAATGRLSSSDPNLQNIPIRTAEGRRIRQAFVAPQGYKLLAADYSQIELRIMAHLAKDDGLLDAFRHDLDVHRATAAEVFGVPLEDVSGDQRRSAKAINFGLIYGMSAFGLAKQIGVERKEAQAYIDRYFARYPGVLAYMERTRAQAAEQGFVETLFGRRLYLPEIHSKNGAMRKAAERTAINAPMQGTAADIMKRAMVAVDNWLQESGLDARVILQVHDELVLEVREDLVEQVCEGIRPLMSGAATLDVPLVVEAGVGSNWDEAH</sequence>
<proteinExistence type="inferred from homology"/>
<accession>Q9HT80</accession>